<name>HIS6_BRUMB</name>
<accession>C0RFX3</accession>
<dbReference type="EC" id="4.3.2.10" evidence="1"/>
<dbReference type="EMBL" id="CP001488">
    <property type="protein sequence ID" value="ACO01795.1"/>
    <property type="molecule type" value="Genomic_DNA"/>
</dbReference>
<dbReference type="RefSeq" id="WP_004684543.1">
    <property type="nucleotide sequence ID" value="NC_012441.1"/>
</dbReference>
<dbReference type="SMR" id="C0RFX3"/>
<dbReference type="GeneID" id="29594929"/>
<dbReference type="KEGG" id="bmi:BMEA_A2147"/>
<dbReference type="HOGENOM" id="CLU_048577_4_0_5"/>
<dbReference type="UniPathway" id="UPA00031">
    <property type="reaction ID" value="UER00010"/>
</dbReference>
<dbReference type="PRO" id="PR:C0RFX3"/>
<dbReference type="Proteomes" id="UP000001748">
    <property type="component" value="Chromosome I"/>
</dbReference>
<dbReference type="GO" id="GO:0005737">
    <property type="term" value="C:cytoplasm"/>
    <property type="evidence" value="ECO:0007669"/>
    <property type="project" value="UniProtKB-SubCell"/>
</dbReference>
<dbReference type="GO" id="GO:0000107">
    <property type="term" value="F:imidazoleglycerol-phosphate synthase activity"/>
    <property type="evidence" value="ECO:0007669"/>
    <property type="project" value="UniProtKB-UniRule"/>
</dbReference>
<dbReference type="GO" id="GO:0016829">
    <property type="term" value="F:lyase activity"/>
    <property type="evidence" value="ECO:0007669"/>
    <property type="project" value="UniProtKB-KW"/>
</dbReference>
<dbReference type="GO" id="GO:0000105">
    <property type="term" value="P:L-histidine biosynthetic process"/>
    <property type="evidence" value="ECO:0007669"/>
    <property type="project" value="UniProtKB-UniRule"/>
</dbReference>
<dbReference type="CDD" id="cd04731">
    <property type="entry name" value="HisF"/>
    <property type="match status" value="1"/>
</dbReference>
<dbReference type="FunFam" id="3.20.20.70:FF:000006">
    <property type="entry name" value="Imidazole glycerol phosphate synthase subunit HisF"/>
    <property type="match status" value="1"/>
</dbReference>
<dbReference type="Gene3D" id="3.20.20.70">
    <property type="entry name" value="Aldolase class I"/>
    <property type="match status" value="1"/>
</dbReference>
<dbReference type="HAMAP" id="MF_01013">
    <property type="entry name" value="HisF"/>
    <property type="match status" value="1"/>
</dbReference>
<dbReference type="InterPro" id="IPR013785">
    <property type="entry name" value="Aldolase_TIM"/>
</dbReference>
<dbReference type="InterPro" id="IPR006062">
    <property type="entry name" value="His_biosynth"/>
</dbReference>
<dbReference type="InterPro" id="IPR004651">
    <property type="entry name" value="HisF"/>
</dbReference>
<dbReference type="InterPro" id="IPR050064">
    <property type="entry name" value="IGPS_HisA/HisF"/>
</dbReference>
<dbReference type="InterPro" id="IPR011060">
    <property type="entry name" value="RibuloseP-bd_barrel"/>
</dbReference>
<dbReference type="NCBIfam" id="TIGR00735">
    <property type="entry name" value="hisF"/>
    <property type="match status" value="1"/>
</dbReference>
<dbReference type="PANTHER" id="PTHR21235:SF2">
    <property type="entry name" value="IMIDAZOLE GLYCEROL PHOSPHATE SYNTHASE HISHF"/>
    <property type="match status" value="1"/>
</dbReference>
<dbReference type="PANTHER" id="PTHR21235">
    <property type="entry name" value="IMIDAZOLE GLYCEROL PHOSPHATE SYNTHASE SUBUNIT HISF/H IGP SYNTHASE SUBUNIT HISF/H"/>
    <property type="match status" value="1"/>
</dbReference>
<dbReference type="Pfam" id="PF00977">
    <property type="entry name" value="His_biosynth"/>
    <property type="match status" value="1"/>
</dbReference>
<dbReference type="SUPFAM" id="SSF51366">
    <property type="entry name" value="Ribulose-phoshate binding barrel"/>
    <property type="match status" value="1"/>
</dbReference>
<protein>
    <recommendedName>
        <fullName evidence="1">Imidazole glycerol phosphate synthase subunit HisF</fullName>
        <ecNumber evidence="1">4.3.2.10</ecNumber>
    </recommendedName>
    <alternativeName>
        <fullName evidence="1">IGP synthase cyclase subunit</fullName>
    </alternativeName>
    <alternativeName>
        <fullName evidence="1">IGP synthase subunit HisF</fullName>
    </alternativeName>
    <alternativeName>
        <fullName evidence="1">ImGP synthase subunit HisF</fullName>
        <shortName evidence="1">IGPS subunit HisF</shortName>
    </alternativeName>
</protein>
<reference key="1">
    <citation type="submission" date="2009-03" db="EMBL/GenBank/DDBJ databases">
        <title>Brucella melitensis ATCC 23457 whole genome shotgun sequencing project.</title>
        <authorList>
            <person name="Setubal J.C."/>
            <person name="Boyle S."/>
            <person name="Crasta O.R."/>
            <person name="Gillespie J.J."/>
            <person name="Kenyon R.W."/>
            <person name="Lu J."/>
            <person name="Mane S."/>
            <person name="Nagrani S."/>
            <person name="Shallom J.M."/>
            <person name="Shallom S."/>
            <person name="Shukla M."/>
            <person name="Snyder E.E."/>
            <person name="Sobral B.W."/>
            <person name="Wattam A.R."/>
            <person name="Will R."/>
            <person name="Williams K."/>
            <person name="Yoo H."/>
            <person name="Munk C."/>
            <person name="Tapia R."/>
            <person name="Han C."/>
            <person name="Detter J.C."/>
            <person name="Bruce D."/>
            <person name="Brettin T.S."/>
        </authorList>
    </citation>
    <scope>NUCLEOTIDE SEQUENCE [LARGE SCALE GENOMIC DNA]</scope>
    <source>
        <strain>ATCC 23457</strain>
    </source>
</reference>
<organism>
    <name type="scientific">Brucella melitensis biotype 2 (strain ATCC 23457)</name>
    <dbReference type="NCBI Taxonomy" id="546272"/>
    <lineage>
        <taxon>Bacteria</taxon>
        <taxon>Pseudomonadati</taxon>
        <taxon>Pseudomonadota</taxon>
        <taxon>Alphaproteobacteria</taxon>
        <taxon>Hyphomicrobiales</taxon>
        <taxon>Brucellaceae</taxon>
        <taxon>Brucella/Ochrobactrum group</taxon>
        <taxon>Brucella</taxon>
    </lineage>
</organism>
<gene>
    <name evidence="1" type="primary">hisF</name>
    <name type="ordered locus">BMEA_A2147</name>
</gene>
<proteinExistence type="inferred from homology"/>
<feature type="chain" id="PRO_1000148908" description="Imidazole glycerol phosphate synthase subunit HisF">
    <location>
        <begin position="1"/>
        <end position="261"/>
    </location>
</feature>
<feature type="active site" evidence="1">
    <location>
        <position position="12"/>
    </location>
</feature>
<feature type="active site" evidence="1">
    <location>
        <position position="131"/>
    </location>
</feature>
<sequence length="261" mass="27455">MTLKARVIPCLDVKDGRVVKGVNFVDLIDAGDPVEAARAYDAAGADELCFLDITASSDNRETIFDVVARTAEQCFMPLTVGGGVRQVADIRKLLLAGADKVSINTAAVKNPEFVAEAADKFGNQCIVVAIDAKKVSGAGENDHWEIFTHGGRQPTGIDAVEFAQKVVDLGAGEILLTSMDRDGTKAGYDVALTRAVADSVRAPVIASGGVGTLDHLVAGIRDGHATAVLAASIFHFGTYTIGEAKRYMAEAGIPMRLDPVR</sequence>
<comment type="function">
    <text evidence="1">IGPS catalyzes the conversion of PRFAR and glutamine to IGP, AICAR and glutamate. The HisF subunit catalyzes the cyclization activity that produces IGP and AICAR from PRFAR using the ammonia provided by the HisH subunit.</text>
</comment>
<comment type="catalytic activity">
    <reaction evidence="1">
        <text>5-[(5-phospho-1-deoxy-D-ribulos-1-ylimino)methylamino]-1-(5-phospho-beta-D-ribosyl)imidazole-4-carboxamide + L-glutamine = D-erythro-1-(imidazol-4-yl)glycerol 3-phosphate + 5-amino-1-(5-phospho-beta-D-ribosyl)imidazole-4-carboxamide + L-glutamate + H(+)</text>
        <dbReference type="Rhea" id="RHEA:24793"/>
        <dbReference type="ChEBI" id="CHEBI:15378"/>
        <dbReference type="ChEBI" id="CHEBI:29985"/>
        <dbReference type="ChEBI" id="CHEBI:58278"/>
        <dbReference type="ChEBI" id="CHEBI:58359"/>
        <dbReference type="ChEBI" id="CHEBI:58475"/>
        <dbReference type="ChEBI" id="CHEBI:58525"/>
        <dbReference type="EC" id="4.3.2.10"/>
    </reaction>
</comment>
<comment type="pathway">
    <text evidence="1">Amino-acid biosynthesis; L-histidine biosynthesis; L-histidine from 5-phospho-alpha-D-ribose 1-diphosphate: step 5/9.</text>
</comment>
<comment type="subunit">
    <text evidence="1">Heterodimer of HisH and HisF.</text>
</comment>
<comment type="subcellular location">
    <subcellularLocation>
        <location evidence="1">Cytoplasm</location>
    </subcellularLocation>
</comment>
<comment type="similarity">
    <text evidence="1">Belongs to the HisA/HisF family.</text>
</comment>
<keyword id="KW-0028">Amino-acid biosynthesis</keyword>
<keyword id="KW-0963">Cytoplasm</keyword>
<keyword id="KW-0368">Histidine biosynthesis</keyword>
<keyword id="KW-0456">Lyase</keyword>
<evidence type="ECO:0000255" key="1">
    <source>
        <dbReference type="HAMAP-Rule" id="MF_01013"/>
    </source>
</evidence>